<protein>
    <recommendedName>
        <fullName>PWWP domain-containing protein 2A</fullName>
    </recommendedName>
</protein>
<organism>
    <name type="scientific">Homo sapiens</name>
    <name type="common">Human</name>
    <dbReference type="NCBI Taxonomy" id="9606"/>
    <lineage>
        <taxon>Eukaryota</taxon>
        <taxon>Metazoa</taxon>
        <taxon>Chordata</taxon>
        <taxon>Craniata</taxon>
        <taxon>Vertebrata</taxon>
        <taxon>Euteleostomi</taxon>
        <taxon>Mammalia</taxon>
        <taxon>Eutheria</taxon>
        <taxon>Euarchontoglires</taxon>
        <taxon>Primates</taxon>
        <taxon>Haplorrhini</taxon>
        <taxon>Catarrhini</taxon>
        <taxon>Hominidae</taxon>
        <taxon>Homo</taxon>
    </lineage>
</organism>
<sequence length="755" mass="81960">MAAVAAEAAATAASPGEGGAGEAEPEMEPIPGSEAGTDPLPVTATEASVPDGETDGQQSAPQADEPPLPPPPPPPGELARSPEAVGPELEAEEKLSVRVAESAAAAPQGGPELPPSPASPPEQPPAPEEREEPPLPQPVAPALVPPAGGDSTVSQLIPGSEVRVTLDHIIEDALVVSFRFGEKLFSGVLMDLSKRFGPHGIPVTVFPKREYKDKPEAMPLQSNTFQEGTEVKCEANGAVPDDPSPVPHPELSLAESLWTSKPPPLFHEGAPYPPPLFIRDTYNQSIPQPPPRKIKRPKRKMYREEPTSIMNAIKLRPRQVLCDKCKNSVVAEKKEIRKGSSATDSSKYEDKKRRNESVTTVNKKLKTDHKVDGKNQNESQKRNAVVKVSNIAHSRGRVVKVSAQANTSKAQLSTKKVLQSKNMDHAKAREVLKIAKEKAQKKQNETSTSKNAHSKVHFTRRYQNPSSGSLPPRVRLKPQRYRNEENDSSLKTGLEKMRSGKMAPKPQSRCTSTRSAGEAPSENQSPSKGPEEASSEVQDTNEVHVPGDQDEPQTLGKKGSKNNISVYMTLNQKKSDSSSASVCSIDSTDDLKSSNSECSSSESFDFPPGSMHAPSTSSTSSSSKEEKKLSNSLKMKVFSKNVSKCVTPDGRTICVGDIVWAKIYGFPWWPARILTITVSRKDNGLLVRQEARISWFGSPTTSFLALSQLSPFLENFQSRFNKKRKGLYRKAITEAAKAAKQLTPEVRALLTQFET</sequence>
<dbReference type="EMBL" id="AB067522">
    <property type="protein sequence ID" value="BAB67828.1"/>
    <property type="status" value="ALT_INIT"/>
    <property type="molecule type" value="mRNA"/>
</dbReference>
<dbReference type="EMBL" id="AK055921">
    <property type="protein sequence ID" value="BAB71045.1"/>
    <property type="status" value="ALT_INIT"/>
    <property type="molecule type" value="mRNA"/>
</dbReference>
<dbReference type="EMBL" id="AC008706">
    <property type="status" value="NOT_ANNOTATED_CDS"/>
    <property type="molecule type" value="Genomic_DNA"/>
</dbReference>
<dbReference type="EMBL" id="CH471062">
    <property type="protein sequence ID" value="EAW61567.1"/>
    <property type="molecule type" value="Genomic_DNA"/>
</dbReference>
<dbReference type="EMBL" id="CH471062">
    <property type="protein sequence ID" value="EAW61568.1"/>
    <property type="molecule type" value="Genomic_DNA"/>
</dbReference>
<dbReference type="EMBL" id="BC035076">
    <property type="protein sequence ID" value="AAH35076.2"/>
    <property type="status" value="ALT_INIT"/>
    <property type="molecule type" value="mRNA"/>
</dbReference>
<dbReference type="EMBL" id="BC105110">
    <property type="protein sequence ID" value="AAI05111.1"/>
    <property type="molecule type" value="mRNA"/>
</dbReference>
<dbReference type="CCDS" id="CCDS47331.1">
    <molecule id="Q96N64-2"/>
</dbReference>
<dbReference type="CCDS" id="CCDS47332.1">
    <molecule id="Q96N64-1"/>
</dbReference>
<dbReference type="CCDS" id="CCDS58990.1">
    <molecule id="Q96N64-3"/>
</dbReference>
<dbReference type="RefSeq" id="NP_001124336.1">
    <molecule id="Q96N64-1"/>
    <property type="nucleotide sequence ID" value="NM_001130864.2"/>
</dbReference>
<dbReference type="RefSeq" id="NP_001253964.1">
    <molecule id="Q96N64-3"/>
    <property type="nucleotide sequence ID" value="NM_001267035.3"/>
</dbReference>
<dbReference type="RefSeq" id="NP_443159.1">
    <molecule id="Q96N64-2"/>
    <property type="nucleotide sequence ID" value="NM_052927.4"/>
</dbReference>
<dbReference type="SMR" id="Q96N64"/>
<dbReference type="BioGRID" id="125375">
    <property type="interactions" value="78"/>
</dbReference>
<dbReference type="FunCoup" id="Q96N64">
    <property type="interactions" value="3505"/>
</dbReference>
<dbReference type="IntAct" id="Q96N64">
    <property type="interactions" value="26"/>
</dbReference>
<dbReference type="MINT" id="Q96N64"/>
<dbReference type="STRING" id="9606.ENSP00000305151"/>
<dbReference type="GlyGen" id="Q96N64">
    <property type="glycosylation" value="2 sites, 1 O-linked glycan (2 sites)"/>
</dbReference>
<dbReference type="iPTMnet" id="Q96N64"/>
<dbReference type="MetOSite" id="Q96N64"/>
<dbReference type="PhosphoSitePlus" id="Q96N64"/>
<dbReference type="BioMuta" id="PWWP2A"/>
<dbReference type="DMDM" id="160419226"/>
<dbReference type="jPOST" id="Q96N64"/>
<dbReference type="MassIVE" id="Q96N64"/>
<dbReference type="PaxDb" id="9606-ENSP00000305151"/>
<dbReference type="PeptideAtlas" id="Q96N64"/>
<dbReference type="ProteomicsDB" id="34103"/>
<dbReference type="ProteomicsDB" id="77468">
    <molecule id="Q96N64-1"/>
</dbReference>
<dbReference type="ProteomicsDB" id="77469">
    <molecule id="Q96N64-2"/>
</dbReference>
<dbReference type="Pumba" id="Q96N64"/>
<dbReference type="Antibodypedia" id="28516">
    <property type="antibodies" value="34 antibodies from 15 providers"/>
</dbReference>
<dbReference type="DNASU" id="114825"/>
<dbReference type="Ensembl" id="ENST00000307063.9">
    <molecule id="Q96N64-1"/>
    <property type="protein sequence ID" value="ENSP00000305151.7"/>
    <property type="gene ID" value="ENSG00000170234.13"/>
</dbReference>
<dbReference type="Ensembl" id="ENST00000456329.7">
    <molecule id="Q96N64-2"/>
    <property type="protein sequence ID" value="ENSP00000390462.2"/>
    <property type="gene ID" value="ENSG00000170234.13"/>
</dbReference>
<dbReference type="Ensembl" id="ENST00000523662.1">
    <molecule id="Q96N64-3"/>
    <property type="protein sequence ID" value="ENSP00000428143.1"/>
    <property type="gene ID" value="ENSG00000170234.13"/>
</dbReference>
<dbReference type="GeneID" id="114825"/>
<dbReference type="KEGG" id="hsa:114825"/>
<dbReference type="MANE-Select" id="ENST00000307063.9">
    <property type="protein sequence ID" value="ENSP00000305151.7"/>
    <property type="RefSeq nucleotide sequence ID" value="NM_001130864.2"/>
    <property type="RefSeq protein sequence ID" value="NP_001124336.1"/>
</dbReference>
<dbReference type="UCSC" id="uc003lxv.5">
    <molecule id="Q96N64-1"/>
    <property type="organism name" value="human"/>
</dbReference>
<dbReference type="AGR" id="HGNC:29406"/>
<dbReference type="CTD" id="114825"/>
<dbReference type="DisGeNET" id="114825"/>
<dbReference type="GeneCards" id="PWWP2A"/>
<dbReference type="HGNC" id="HGNC:29406">
    <property type="gene designation" value="PWWP2A"/>
</dbReference>
<dbReference type="HPA" id="ENSG00000170234">
    <property type="expression patterns" value="Low tissue specificity"/>
</dbReference>
<dbReference type="MIM" id="617823">
    <property type="type" value="gene"/>
</dbReference>
<dbReference type="neXtProt" id="NX_Q96N64"/>
<dbReference type="OpenTargets" id="ENSG00000170234"/>
<dbReference type="PharmGKB" id="PA162400500"/>
<dbReference type="VEuPathDB" id="HostDB:ENSG00000170234"/>
<dbReference type="eggNOG" id="ENOG502QU6V">
    <property type="taxonomic scope" value="Eukaryota"/>
</dbReference>
<dbReference type="GeneTree" id="ENSGT00940000157692"/>
<dbReference type="HOGENOM" id="CLU_035885_0_0_1"/>
<dbReference type="InParanoid" id="Q96N64"/>
<dbReference type="OMA" id="KGSVMEC"/>
<dbReference type="OrthoDB" id="5964980at2759"/>
<dbReference type="PAN-GO" id="Q96N64">
    <property type="GO annotations" value="3 GO annotations based on evolutionary models"/>
</dbReference>
<dbReference type="PhylomeDB" id="Q96N64"/>
<dbReference type="TreeFam" id="TF331271"/>
<dbReference type="PathwayCommons" id="Q96N64"/>
<dbReference type="SignaLink" id="Q96N64"/>
<dbReference type="BioGRID-ORCS" id="114825">
    <property type="hits" value="15 hits in 1152 CRISPR screens"/>
</dbReference>
<dbReference type="ChiTaRS" id="PWWP2A">
    <property type="organism name" value="human"/>
</dbReference>
<dbReference type="GenomeRNAi" id="114825"/>
<dbReference type="Pharos" id="Q96N64">
    <property type="development level" value="Tdark"/>
</dbReference>
<dbReference type="PRO" id="PR:Q96N64"/>
<dbReference type="Proteomes" id="UP000005640">
    <property type="component" value="Chromosome 5"/>
</dbReference>
<dbReference type="RNAct" id="Q96N64">
    <property type="molecule type" value="protein"/>
</dbReference>
<dbReference type="Bgee" id="ENSG00000170234">
    <property type="expression patterns" value="Expressed in ileal mucosa and 183 other cell types or tissues"/>
</dbReference>
<dbReference type="ExpressionAtlas" id="Q96N64">
    <property type="expression patterns" value="baseline and differential"/>
</dbReference>
<dbReference type="GO" id="GO:0005634">
    <property type="term" value="C:nucleus"/>
    <property type="evidence" value="ECO:0000314"/>
    <property type="project" value="UniProtKB"/>
</dbReference>
<dbReference type="GO" id="GO:0003682">
    <property type="term" value="F:chromatin binding"/>
    <property type="evidence" value="ECO:0000314"/>
    <property type="project" value="UniProtKB"/>
</dbReference>
<dbReference type="GO" id="GO:0042393">
    <property type="term" value="F:histone binding"/>
    <property type="evidence" value="ECO:0000353"/>
    <property type="project" value="UniProtKB"/>
</dbReference>
<dbReference type="GO" id="GO:0140003">
    <property type="term" value="F:histone H3K36me3 reader activity"/>
    <property type="evidence" value="ECO:0000314"/>
    <property type="project" value="UniProtKB"/>
</dbReference>
<dbReference type="GO" id="GO:0120325">
    <property type="term" value="F:NuRD complex binding"/>
    <property type="evidence" value="ECO:0000314"/>
    <property type="project" value="UniProtKB"/>
</dbReference>
<dbReference type="GO" id="GO:0006338">
    <property type="term" value="P:chromatin remodeling"/>
    <property type="evidence" value="ECO:0000315"/>
    <property type="project" value="UniProtKB"/>
</dbReference>
<dbReference type="GO" id="GO:0032968">
    <property type="term" value="P:positive regulation of transcription elongation by RNA polymerase II"/>
    <property type="evidence" value="ECO:0000250"/>
    <property type="project" value="UniProtKB"/>
</dbReference>
<dbReference type="GO" id="GO:0001178">
    <property type="term" value="P:regulation of transcriptional start site selection at RNA polymerase II promoter"/>
    <property type="evidence" value="ECO:0000250"/>
    <property type="project" value="UniProtKB"/>
</dbReference>
<dbReference type="CDD" id="cd20152">
    <property type="entry name" value="PWWP_PWWP2A"/>
    <property type="match status" value="1"/>
</dbReference>
<dbReference type="FunFam" id="2.30.30.140:FF:000036">
    <property type="entry name" value="PWWP domain-containing protein 2A"/>
    <property type="match status" value="1"/>
</dbReference>
<dbReference type="Gene3D" id="2.30.30.140">
    <property type="match status" value="1"/>
</dbReference>
<dbReference type="InterPro" id="IPR000313">
    <property type="entry name" value="PWWP_dom"/>
</dbReference>
<dbReference type="PANTHER" id="PTHR48125:SF12">
    <property type="entry name" value="AT HOOK TRANSCRIPTION FACTOR FAMILY-RELATED"/>
    <property type="match status" value="1"/>
</dbReference>
<dbReference type="PANTHER" id="PTHR48125">
    <property type="entry name" value="LP07818P1"/>
    <property type="match status" value="1"/>
</dbReference>
<dbReference type="Pfam" id="PF00855">
    <property type="entry name" value="PWWP"/>
    <property type="match status" value="1"/>
</dbReference>
<dbReference type="SMART" id="SM00293">
    <property type="entry name" value="PWWP"/>
    <property type="match status" value="1"/>
</dbReference>
<dbReference type="SUPFAM" id="SSF63748">
    <property type="entry name" value="Tudor/PWWP/MBT"/>
    <property type="match status" value="1"/>
</dbReference>
<dbReference type="PROSITE" id="PS50812">
    <property type="entry name" value="PWWP"/>
    <property type="match status" value="1"/>
</dbReference>
<gene>
    <name type="primary">PWWP2A</name>
    <name type="synonym">KIAA1935</name>
    <name type="synonym">MST101</name>
</gene>
<keyword id="KW-0025">Alternative splicing</keyword>
<keyword id="KW-1017">Isopeptide bond</keyword>
<keyword id="KW-0539">Nucleus</keyword>
<keyword id="KW-0597">Phosphoprotein</keyword>
<keyword id="KW-1267">Proteomics identification</keyword>
<keyword id="KW-1185">Reference proteome</keyword>
<keyword id="KW-0804">Transcription</keyword>
<keyword id="KW-0805">Transcription regulation</keyword>
<keyword id="KW-0832">Ubl conjugation</keyword>
<accession>Q96N64</accession>
<accession>G5EA07</accession>
<accession>Q2HJJ2</accession>
<accession>Q8IYR3</accession>
<accession>Q96PV3</accession>
<name>PWP2A_HUMAN</name>
<feature type="chain" id="PRO_0000311363" description="PWWP domain-containing protein 2A">
    <location>
        <begin position="1"/>
        <end position="755"/>
    </location>
</feature>
<feature type="domain" description="PWWP" evidence="2">
    <location>
        <begin position="655"/>
        <end position="715"/>
    </location>
</feature>
<feature type="region of interest" description="Disordered" evidence="3">
    <location>
        <begin position="1"/>
        <end position="153"/>
    </location>
</feature>
<feature type="region of interest" description="Interaction with HDAC1 and MTA1" evidence="5">
    <location>
        <begin position="148"/>
        <end position="373"/>
    </location>
</feature>
<feature type="region of interest" description="Disordered" evidence="3">
    <location>
        <begin position="282"/>
        <end position="301"/>
    </location>
</feature>
<feature type="region of interest" description="Disordered" evidence="3">
    <location>
        <begin position="334"/>
        <end position="384"/>
    </location>
</feature>
<feature type="region of interest" description="Disordered" evidence="3">
    <location>
        <begin position="400"/>
        <end position="562"/>
    </location>
</feature>
<feature type="region of interest" description="Interaction with the H2A.Z/H2AZ1" evidence="4">
    <location>
        <begin position="423"/>
        <end position="574"/>
    </location>
</feature>
<feature type="region of interest" description="Disordered" evidence="3">
    <location>
        <begin position="578"/>
        <end position="626"/>
    </location>
</feature>
<feature type="compositionally biased region" description="Low complexity" evidence="3">
    <location>
        <begin position="1"/>
        <end position="15"/>
    </location>
</feature>
<feature type="compositionally biased region" description="Pro residues" evidence="3">
    <location>
        <begin position="64"/>
        <end position="76"/>
    </location>
</feature>
<feature type="compositionally biased region" description="Pro residues" evidence="3">
    <location>
        <begin position="112"/>
        <end position="126"/>
    </location>
</feature>
<feature type="compositionally biased region" description="Basic residues" evidence="3">
    <location>
        <begin position="292"/>
        <end position="301"/>
    </location>
</feature>
<feature type="compositionally biased region" description="Basic and acidic residues" evidence="3">
    <location>
        <begin position="346"/>
        <end position="356"/>
    </location>
</feature>
<feature type="compositionally biased region" description="Basic and acidic residues" evidence="3">
    <location>
        <begin position="368"/>
        <end position="381"/>
    </location>
</feature>
<feature type="compositionally biased region" description="Polar residues" evidence="3">
    <location>
        <begin position="403"/>
        <end position="421"/>
    </location>
</feature>
<feature type="compositionally biased region" description="Basic and acidic residues" evidence="3">
    <location>
        <begin position="422"/>
        <end position="444"/>
    </location>
</feature>
<feature type="compositionally biased region" description="Polar residues" evidence="3">
    <location>
        <begin position="508"/>
        <end position="527"/>
    </location>
</feature>
<feature type="compositionally biased region" description="Low complexity" evidence="3">
    <location>
        <begin position="593"/>
        <end position="603"/>
    </location>
</feature>
<feature type="modified residue" description="Phosphoserine" evidence="9 11 12 13">
    <location>
        <position position="81"/>
    </location>
</feature>
<feature type="modified residue" description="Phosphoserine" evidence="14">
    <location>
        <position position="102"/>
    </location>
</feature>
<feature type="modified residue" description="Phosphoserine" evidence="10 11">
    <location>
        <position position="116"/>
    </location>
</feature>
<feature type="modified residue" description="Phosphoserine" evidence="10 11 14">
    <location>
        <position position="119"/>
    </location>
</feature>
<feature type="cross-link" description="Glycyl lysine isopeptide (Lys-Gly) (interchain with G-Cter in SUMO2)" evidence="15 16">
    <location>
        <position position="208"/>
    </location>
</feature>
<feature type="splice variant" id="VSP_054064" description="In isoform 3." evidence="8">
    <original>GEAP</original>
    <variation>AQRH</variation>
    <location>
        <begin position="517"/>
        <end position="520"/>
    </location>
</feature>
<feature type="splice variant" id="VSP_029547" description="In isoform 2." evidence="7">
    <original>EAPSENQSPSKGPEEASSEVQDTNEVHVPGDQDEPQTLGKKGS</original>
    <variation>LNKWQLLHQTVTSPAAPLQCLTDHCGFRLGALKLTVKRAAQRH</variation>
    <location>
        <begin position="518"/>
        <end position="560"/>
    </location>
</feature>
<feature type="splice variant" id="VSP_054065" description="In isoform 3." evidence="8">
    <location>
        <begin position="521"/>
        <end position="755"/>
    </location>
</feature>
<feature type="splice variant" id="VSP_029548" description="In isoform 2." evidence="7">
    <location>
        <begin position="561"/>
        <end position="755"/>
    </location>
</feature>
<feature type="mutagenesis site" description="No effect on interaction with H3K36me3." evidence="6">
    <original>F</original>
    <variation>A</variation>
    <location>
        <position position="666"/>
    </location>
</feature>
<feature type="mutagenesis site" description="Loss of interaction with H3K36me3." evidence="6">
    <original>W</original>
    <variation>A</variation>
    <location>
        <position position="669"/>
    </location>
</feature>
<feature type="mutagenesis site" description="Loss of interaction with H3K36me3." evidence="6">
    <original>W</original>
    <variation>A</variation>
    <location>
        <position position="695"/>
    </location>
</feature>
<feature type="sequence conflict" description="In Ref. 5; AAH35076." evidence="8" ref="5">
    <original>S</original>
    <variation>L</variation>
    <location>
        <position position="154"/>
    </location>
</feature>
<reference key="1">
    <citation type="journal article" date="2001" name="DNA Res.">
        <title>Prediction of the coding sequences of unidentified human genes. XXI. The complete sequences of 60 new cDNA clones from brain which code for large proteins.</title>
        <authorList>
            <person name="Nagase T."/>
            <person name="Kikuno R."/>
            <person name="Ohara O."/>
        </authorList>
    </citation>
    <scope>NUCLEOTIDE SEQUENCE [LARGE SCALE MRNA] OF 1-435</scope>
    <source>
        <tissue>Brain</tissue>
    </source>
</reference>
<reference key="2">
    <citation type="journal article" date="2004" name="Nat. Genet.">
        <title>Complete sequencing and characterization of 21,243 full-length human cDNAs.</title>
        <authorList>
            <person name="Ota T."/>
            <person name="Suzuki Y."/>
            <person name="Nishikawa T."/>
            <person name="Otsuki T."/>
            <person name="Sugiyama T."/>
            <person name="Irie R."/>
            <person name="Wakamatsu A."/>
            <person name="Hayashi K."/>
            <person name="Sato H."/>
            <person name="Nagai K."/>
            <person name="Kimura K."/>
            <person name="Makita H."/>
            <person name="Sekine M."/>
            <person name="Obayashi M."/>
            <person name="Nishi T."/>
            <person name="Shibahara T."/>
            <person name="Tanaka T."/>
            <person name="Ishii S."/>
            <person name="Yamamoto J."/>
            <person name="Saito K."/>
            <person name="Kawai Y."/>
            <person name="Isono Y."/>
            <person name="Nakamura Y."/>
            <person name="Nagahari K."/>
            <person name="Murakami K."/>
            <person name="Yasuda T."/>
            <person name="Iwayanagi T."/>
            <person name="Wagatsuma M."/>
            <person name="Shiratori A."/>
            <person name="Sudo H."/>
            <person name="Hosoiri T."/>
            <person name="Kaku Y."/>
            <person name="Kodaira H."/>
            <person name="Kondo H."/>
            <person name="Sugawara M."/>
            <person name="Takahashi M."/>
            <person name="Kanda K."/>
            <person name="Yokoi T."/>
            <person name="Furuya T."/>
            <person name="Kikkawa E."/>
            <person name="Omura Y."/>
            <person name="Abe K."/>
            <person name="Kamihara K."/>
            <person name="Katsuta N."/>
            <person name="Sato K."/>
            <person name="Tanikawa M."/>
            <person name="Yamazaki M."/>
            <person name="Ninomiya K."/>
            <person name="Ishibashi T."/>
            <person name="Yamashita H."/>
            <person name="Murakawa K."/>
            <person name="Fujimori K."/>
            <person name="Tanai H."/>
            <person name="Kimata M."/>
            <person name="Watanabe M."/>
            <person name="Hiraoka S."/>
            <person name="Chiba Y."/>
            <person name="Ishida S."/>
            <person name="Ono Y."/>
            <person name="Takiguchi S."/>
            <person name="Watanabe S."/>
            <person name="Yosida M."/>
            <person name="Hotuta T."/>
            <person name="Kusano J."/>
            <person name="Kanehori K."/>
            <person name="Takahashi-Fujii A."/>
            <person name="Hara H."/>
            <person name="Tanase T.-O."/>
            <person name="Nomura Y."/>
            <person name="Togiya S."/>
            <person name="Komai F."/>
            <person name="Hara R."/>
            <person name="Takeuchi K."/>
            <person name="Arita M."/>
            <person name="Imose N."/>
            <person name="Musashino K."/>
            <person name="Yuuki H."/>
            <person name="Oshima A."/>
            <person name="Sasaki N."/>
            <person name="Aotsuka S."/>
            <person name="Yoshikawa Y."/>
            <person name="Matsunawa H."/>
            <person name="Ichihara T."/>
            <person name="Shiohata N."/>
            <person name="Sano S."/>
            <person name="Moriya S."/>
            <person name="Momiyama H."/>
            <person name="Satoh N."/>
            <person name="Takami S."/>
            <person name="Terashima Y."/>
            <person name="Suzuki O."/>
            <person name="Nakagawa S."/>
            <person name="Senoh A."/>
            <person name="Mizoguchi H."/>
            <person name="Goto Y."/>
            <person name="Shimizu F."/>
            <person name="Wakebe H."/>
            <person name="Hishigaki H."/>
            <person name="Watanabe T."/>
            <person name="Sugiyama A."/>
            <person name="Takemoto M."/>
            <person name="Kawakami B."/>
            <person name="Yamazaki M."/>
            <person name="Watanabe K."/>
            <person name="Kumagai A."/>
            <person name="Itakura S."/>
            <person name="Fukuzumi Y."/>
            <person name="Fujimori Y."/>
            <person name="Komiyama M."/>
            <person name="Tashiro H."/>
            <person name="Tanigami A."/>
            <person name="Fujiwara T."/>
            <person name="Ono T."/>
            <person name="Yamada K."/>
            <person name="Fujii Y."/>
            <person name="Ozaki K."/>
            <person name="Hirao M."/>
            <person name="Ohmori Y."/>
            <person name="Kawabata A."/>
            <person name="Hikiji T."/>
            <person name="Kobatake N."/>
            <person name="Inagaki H."/>
            <person name="Ikema Y."/>
            <person name="Okamoto S."/>
            <person name="Okitani R."/>
            <person name="Kawakami T."/>
            <person name="Noguchi S."/>
            <person name="Itoh T."/>
            <person name="Shigeta K."/>
            <person name="Senba T."/>
            <person name="Matsumura K."/>
            <person name="Nakajima Y."/>
            <person name="Mizuno T."/>
            <person name="Morinaga M."/>
            <person name="Sasaki M."/>
            <person name="Togashi T."/>
            <person name="Oyama M."/>
            <person name="Hata H."/>
            <person name="Watanabe M."/>
            <person name="Komatsu T."/>
            <person name="Mizushima-Sugano J."/>
            <person name="Satoh T."/>
            <person name="Shirai Y."/>
            <person name="Takahashi Y."/>
            <person name="Nakagawa K."/>
            <person name="Okumura K."/>
            <person name="Nagase T."/>
            <person name="Nomura N."/>
            <person name="Kikuchi H."/>
            <person name="Masuho Y."/>
            <person name="Yamashita R."/>
            <person name="Nakai K."/>
            <person name="Yada T."/>
            <person name="Nakamura Y."/>
            <person name="Ohara O."/>
            <person name="Isogai T."/>
            <person name="Sugano S."/>
        </authorList>
    </citation>
    <scope>NUCLEOTIDE SEQUENCE [LARGE SCALE MRNA] OF 241-755</scope>
</reference>
<reference key="3">
    <citation type="journal article" date="2004" name="Nature">
        <title>The DNA sequence and comparative analysis of human chromosome 5.</title>
        <authorList>
            <person name="Schmutz J."/>
            <person name="Martin J."/>
            <person name="Terry A."/>
            <person name="Couronne O."/>
            <person name="Grimwood J."/>
            <person name="Lowry S."/>
            <person name="Gordon L.A."/>
            <person name="Scott D."/>
            <person name="Xie G."/>
            <person name="Huang W."/>
            <person name="Hellsten U."/>
            <person name="Tran-Gyamfi M."/>
            <person name="She X."/>
            <person name="Prabhakar S."/>
            <person name="Aerts A."/>
            <person name="Altherr M."/>
            <person name="Bajorek E."/>
            <person name="Black S."/>
            <person name="Branscomb E."/>
            <person name="Caoile C."/>
            <person name="Challacombe J.F."/>
            <person name="Chan Y.M."/>
            <person name="Denys M."/>
            <person name="Detter J.C."/>
            <person name="Escobar J."/>
            <person name="Flowers D."/>
            <person name="Fotopulos D."/>
            <person name="Glavina T."/>
            <person name="Gomez M."/>
            <person name="Gonzales E."/>
            <person name="Goodstein D."/>
            <person name="Grigoriev I."/>
            <person name="Groza M."/>
            <person name="Hammon N."/>
            <person name="Hawkins T."/>
            <person name="Haydu L."/>
            <person name="Israni S."/>
            <person name="Jett J."/>
            <person name="Kadner K."/>
            <person name="Kimball H."/>
            <person name="Kobayashi A."/>
            <person name="Lopez F."/>
            <person name="Lou Y."/>
            <person name="Martinez D."/>
            <person name="Medina C."/>
            <person name="Morgan J."/>
            <person name="Nandkeshwar R."/>
            <person name="Noonan J.P."/>
            <person name="Pitluck S."/>
            <person name="Pollard M."/>
            <person name="Predki P."/>
            <person name="Priest J."/>
            <person name="Ramirez L."/>
            <person name="Retterer J."/>
            <person name="Rodriguez A."/>
            <person name="Rogers S."/>
            <person name="Salamov A."/>
            <person name="Salazar A."/>
            <person name="Thayer N."/>
            <person name="Tice H."/>
            <person name="Tsai M."/>
            <person name="Ustaszewska A."/>
            <person name="Vo N."/>
            <person name="Wheeler J."/>
            <person name="Wu K."/>
            <person name="Yang J."/>
            <person name="Dickson M."/>
            <person name="Cheng J.-F."/>
            <person name="Eichler E.E."/>
            <person name="Olsen A."/>
            <person name="Pennacchio L.A."/>
            <person name="Rokhsar D.S."/>
            <person name="Richardson P."/>
            <person name="Lucas S.M."/>
            <person name="Myers R.M."/>
            <person name="Rubin E.M."/>
        </authorList>
    </citation>
    <scope>NUCLEOTIDE SEQUENCE [LARGE SCALE GENOMIC DNA]</scope>
</reference>
<reference key="4">
    <citation type="submission" date="2005-09" db="EMBL/GenBank/DDBJ databases">
        <authorList>
            <person name="Mural R.J."/>
            <person name="Istrail S."/>
            <person name="Sutton G.G."/>
            <person name="Florea L."/>
            <person name="Halpern A.L."/>
            <person name="Mobarry C.M."/>
            <person name="Lippert R."/>
            <person name="Walenz B."/>
            <person name="Shatkay H."/>
            <person name="Dew I."/>
            <person name="Miller J.R."/>
            <person name="Flanigan M.J."/>
            <person name="Edwards N.J."/>
            <person name="Bolanos R."/>
            <person name="Fasulo D."/>
            <person name="Halldorsson B.V."/>
            <person name="Hannenhalli S."/>
            <person name="Turner R."/>
            <person name="Yooseph S."/>
            <person name="Lu F."/>
            <person name="Nusskern D.R."/>
            <person name="Shue B.C."/>
            <person name="Zheng X.H."/>
            <person name="Zhong F."/>
            <person name="Delcher A.L."/>
            <person name="Huson D.H."/>
            <person name="Kravitz S.A."/>
            <person name="Mouchard L."/>
            <person name="Reinert K."/>
            <person name="Remington K.A."/>
            <person name="Clark A.G."/>
            <person name="Waterman M.S."/>
            <person name="Eichler E.E."/>
            <person name="Adams M.D."/>
            <person name="Hunkapiller M.W."/>
            <person name="Myers E.W."/>
            <person name="Venter J.C."/>
        </authorList>
    </citation>
    <scope>NUCLEOTIDE SEQUENCE [LARGE SCALE GENOMIC DNA]</scope>
</reference>
<reference key="5">
    <citation type="journal article" date="2004" name="Genome Res.">
        <title>The status, quality, and expansion of the NIH full-length cDNA project: the Mammalian Gene Collection (MGC).</title>
        <authorList>
            <consortium name="The MGC Project Team"/>
        </authorList>
    </citation>
    <scope>NUCLEOTIDE SEQUENCE [LARGE SCALE MRNA] (ISOFORM 2)</scope>
    <source>
        <tissue>Brain</tissue>
    </source>
</reference>
<reference key="6">
    <citation type="journal article" date="2006" name="Cell">
        <title>Global, in vivo, and site-specific phosphorylation dynamics in signaling networks.</title>
        <authorList>
            <person name="Olsen J.V."/>
            <person name="Blagoev B."/>
            <person name="Gnad F."/>
            <person name="Macek B."/>
            <person name="Kumar C."/>
            <person name="Mortensen P."/>
            <person name="Mann M."/>
        </authorList>
    </citation>
    <scope>PHOSPHORYLATION [LARGE SCALE ANALYSIS] AT SER-81</scope>
    <scope>IDENTIFICATION BY MASS SPECTROMETRY [LARGE SCALE ANALYSIS]</scope>
    <source>
        <tissue>Cervix carcinoma</tissue>
    </source>
</reference>
<reference key="7">
    <citation type="journal article" date="2008" name="Proc. Natl. Acad. Sci. U.S.A.">
        <title>A quantitative atlas of mitotic phosphorylation.</title>
        <authorList>
            <person name="Dephoure N."/>
            <person name="Zhou C."/>
            <person name="Villen J."/>
            <person name="Beausoleil S.A."/>
            <person name="Bakalarski C.E."/>
            <person name="Elledge S.J."/>
            <person name="Gygi S.P."/>
        </authorList>
    </citation>
    <scope>IDENTIFICATION BY MASS SPECTROMETRY [LARGE SCALE ANALYSIS]</scope>
    <source>
        <tissue>Cervix carcinoma</tissue>
    </source>
</reference>
<reference key="8">
    <citation type="journal article" date="2009" name="Sci. Signal.">
        <title>Quantitative phosphoproteomic analysis of T cell receptor signaling reveals system-wide modulation of protein-protein interactions.</title>
        <authorList>
            <person name="Mayya V."/>
            <person name="Lundgren D.H."/>
            <person name="Hwang S.-I."/>
            <person name="Rezaul K."/>
            <person name="Wu L."/>
            <person name="Eng J.K."/>
            <person name="Rodionov V."/>
            <person name="Han D.K."/>
        </authorList>
    </citation>
    <scope>PHOSPHORYLATION [LARGE SCALE ANALYSIS] AT SER-116 AND SER-119</scope>
    <scope>IDENTIFICATION BY MASS SPECTROMETRY [LARGE SCALE ANALYSIS]</scope>
    <source>
        <tissue>Leukemic T-cell</tissue>
    </source>
</reference>
<reference key="9">
    <citation type="journal article" date="2010" name="Sci. Signal.">
        <title>Quantitative phosphoproteomics reveals widespread full phosphorylation site occupancy during mitosis.</title>
        <authorList>
            <person name="Olsen J.V."/>
            <person name="Vermeulen M."/>
            <person name="Santamaria A."/>
            <person name="Kumar C."/>
            <person name="Miller M.L."/>
            <person name="Jensen L.J."/>
            <person name="Gnad F."/>
            <person name="Cox J."/>
            <person name="Jensen T.S."/>
            <person name="Nigg E.A."/>
            <person name="Brunak S."/>
            <person name="Mann M."/>
        </authorList>
    </citation>
    <scope>PHOSPHORYLATION [LARGE SCALE ANALYSIS] AT SER-81; SER-116 AND SER-119</scope>
    <scope>IDENTIFICATION BY MASS SPECTROMETRY [LARGE SCALE ANALYSIS]</scope>
    <source>
        <tissue>Cervix carcinoma</tissue>
    </source>
</reference>
<reference key="10">
    <citation type="journal article" date="2011" name="Sci. Signal.">
        <title>System-wide temporal characterization of the proteome and phosphoproteome of human embryonic stem cell differentiation.</title>
        <authorList>
            <person name="Rigbolt K.T."/>
            <person name="Prokhorova T.A."/>
            <person name="Akimov V."/>
            <person name="Henningsen J."/>
            <person name="Johansen P.T."/>
            <person name="Kratchmarova I."/>
            <person name="Kassem M."/>
            <person name="Mann M."/>
            <person name="Olsen J.V."/>
            <person name="Blagoev B."/>
        </authorList>
    </citation>
    <scope>PHOSPHORYLATION [LARGE SCALE ANALYSIS] AT SER-81</scope>
    <scope>IDENTIFICATION BY MASS SPECTROMETRY [LARGE SCALE ANALYSIS]</scope>
</reference>
<reference key="11">
    <citation type="journal article" date="2013" name="J. Proteome Res.">
        <title>Toward a comprehensive characterization of a human cancer cell phosphoproteome.</title>
        <authorList>
            <person name="Zhou H."/>
            <person name="Di Palma S."/>
            <person name="Preisinger C."/>
            <person name="Peng M."/>
            <person name="Polat A.N."/>
            <person name="Heck A.J."/>
            <person name="Mohammed S."/>
        </authorList>
    </citation>
    <scope>PHOSPHORYLATION [LARGE SCALE ANALYSIS] AT SER-81</scope>
    <scope>IDENTIFICATION BY MASS SPECTROMETRY [LARGE SCALE ANALYSIS]</scope>
    <source>
        <tissue>Cervix carcinoma</tissue>
        <tissue>Erythroleukemia</tissue>
    </source>
</reference>
<reference key="12">
    <citation type="journal article" date="2014" name="J. Proteomics">
        <title>An enzyme assisted RP-RPLC approach for in-depth analysis of human liver phosphoproteome.</title>
        <authorList>
            <person name="Bian Y."/>
            <person name="Song C."/>
            <person name="Cheng K."/>
            <person name="Dong M."/>
            <person name="Wang F."/>
            <person name="Huang J."/>
            <person name="Sun D."/>
            <person name="Wang L."/>
            <person name="Ye M."/>
            <person name="Zou H."/>
        </authorList>
    </citation>
    <scope>PHOSPHORYLATION [LARGE SCALE ANALYSIS] AT SER-102 AND SER-119</scope>
    <scope>IDENTIFICATION BY MASS SPECTROMETRY [LARGE SCALE ANALYSIS]</scope>
    <source>
        <tissue>Liver</tissue>
    </source>
</reference>
<reference key="13">
    <citation type="journal article" date="2015" name="Mol. Cell. Proteomics">
        <title>System-wide analysis of SUMOylation dynamics in response to replication stress reveals novel small ubiquitin-like modified target proteins and acceptor lysines relevant for genome stability.</title>
        <authorList>
            <person name="Xiao Z."/>
            <person name="Chang J.G."/>
            <person name="Hendriks I.A."/>
            <person name="Sigurdsson J.O."/>
            <person name="Olsen J.V."/>
            <person name="Vertegaal A.C."/>
        </authorList>
    </citation>
    <scope>SUMOYLATION [LARGE SCALE ANALYSIS] AT LYS-208</scope>
    <scope>IDENTIFICATION BY MASS SPECTROMETRY [LARGE SCALE ANALYSIS]</scope>
</reference>
<reference key="14">
    <citation type="journal article" date="2017" name="EMBO J.">
        <title>Multivalent binding of PWWP2A to H2A.Z regulates mitosis and neural crest differentiation.</title>
        <authorList>
            <person name="Puenzeler S."/>
            <person name="Link S."/>
            <person name="Wagner G."/>
            <person name="Keilhauer E.C."/>
            <person name="Kronbeck N."/>
            <person name="Spitzer R.M."/>
            <person name="Leidescher S."/>
            <person name="Markaki Y."/>
            <person name="Mentele E."/>
            <person name="Regnard C."/>
            <person name="Schneider K."/>
            <person name="Takahashi D."/>
            <person name="Kusakabe M."/>
            <person name="Vardabasso C."/>
            <person name="Zink L.M."/>
            <person name="Straub T."/>
            <person name="Bernstein E."/>
            <person name="Harata M."/>
            <person name="Leonhardt H."/>
            <person name="Mann M."/>
            <person name="Rupp R.A."/>
            <person name="Hake S.B."/>
        </authorList>
    </citation>
    <scope>FUNCTION</scope>
    <scope>IDENTIFICATION BY MASS SPECTROMETRY</scope>
    <scope>INTERACTION WITH H2AZ1</scope>
    <scope>SUBCELLULAR LOCATION</scope>
</reference>
<reference key="15">
    <citation type="journal article" date="2017" name="Nat. Struct. Mol. Biol.">
        <title>Site-specific mapping of the human SUMO proteome reveals co-modification with phosphorylation.</title>
        <authorList>
            <person name="Hendriks I.A."/>
            <person name="Lyon D."/>
            <person name="Young C."/>
            <person name="Jensen L.J."/>
            <person name="Vertegaal A.C."/>
            <person name="Nielsen M.L."/>
        </authorList>
    </citation>
    <scope>SUMOYLATION [LARGE SCALE ANALYSIS] AT LYS-208</scope>
    <scope>IDENTIFICATION BY MASS SPECTROMETRY [LARGE SCALE ANALYSIS]</scope>
</reference>
<reference key="16">
    <citation type="journal article" date="2018" name="Nat. Commun.">
        <title>A variant NuRD complex containing PWWP2A/B excludes MBD2/3 to regulate transcription at active genes.</title>
        <authorList>
            <person name="Zhang T."/>
            <person name="Wei G."/>
            <person name="Millard C.J."/>
            <person name="Fischer R."/>
            <person name="Konietzny R."/>
            <person name="Kessler B.M."/>
            <person name="Schwabe J.W.R."/>
            <person name="Brockdorff N."/>
        </authorList>
    </citation>
    <scope>FUNCTION</scope>
    <scope>INTERACTION WITH MTA1 AND HDAC1 (ISOFORMS 1 AND 3)</scope>
    <scope>INTERACTION WITH H3K36ME3</scope>
    <scope>ABSENCE OF INTERACTION WITH CHD4 AND MBD3</scope>
    <scope>IDENTIFICATION IN A MTA1-SPECIFIC SUBCOMPLEX OF THE NURD COMPLEX</scope>
</reference>
<reference key="17">
    <citation type="journal article" date="2018" name="Nat. Commun.">
        <title>PWWP2A binds distinct chromatin moieties and interacts with an MTA1-specific core NuRD complex.</title>
        <authorList>
            <person name="Link S."/>
            <person name="Spitzer R.M.M."/>
            <person name="Sana M."/>
            <person name="Torrado M."/>
            <person name="Voelker-Albert M.C."/>
            <person name="Keilhauer E.C."/>
            <person name="Burgold T."/>
            <person name="Puenzeler S."/>
            <person name="Low J.K.K."/>
            <person name="Lindstroem I."/>
            <person name="Nist A."/>
            <person name="Regnard C."/>
            <person name="Stiewe T."/>
            <person name="Hendrich B."/>
            <person name="Imhof A."/>
            <person name="Mann M."/>
            <person name="Mackay J.P."/>
            <person name="Bartkuhn M."/>
            <person name="Hake S.B."/>
        </authorList>
    </citation>
    <scope>FUNCTION</scope>
    <scope>INTERACTION WITH MTA1; H2AZ1 AND H3K36ME3</scope>
    <scope>ABSENCE OF INTERACTION WITH MBD3</scope>
    <scope>IDENTIFICATION IN A MTA1-SPECIFIC SUBCOMPLEX OF THE NURD COMPLEX</scope>
    <scope>MUTAGENESIS OF PHE-666; TRP-669 AND TRP-695</scope>
</reference>
<evidence type="ECO:0000250" key="1">
    <source>
        <dbReference type="UniProtKB" id="Q69Z61"/>
    </source>
</evidence>
<evidence type="ECO:0000255" key="2">
    <source>
        <dbReference type="PROSITE-ProRule" id="PRU00162"/>
    </source>
</evidence>
<evidence type="ECO:0000256" key="3">
    <source>
        <dbReference type="SAM" id="MobiDB-lite"/>
    </source>
</evidence>
<evidence type="ECO:0000269" key="4">
    <source>
    </source>
</evidence>
<evidence type="ECO:0000269" key="5">
    <source>
    </source>
</evidence>
<evidence type="ECO:0000269" key="6">
    <source>
    </source>
</evidence>
<evidence type="ECO:0000303" key="7">
    <source>
    </source>
</evidence>
<evidence type="ECO:0000305" key="8"/>
<evidence type="ECO:0007744" key="9">
    <source>
    </source>
</evidence>
<evidence type="ECO:0007744" key="10">
    <source>
    </source>
</evidence>
<evidence type="ECO:0007744" key="11">
    <source>
    </source>
</evidence>
<evidence type="ECO:0007744" key="12">
    <source>
    </source>
</evidence>
<evidence type="ECO:0007744" key="13">
    <source>
    </source>
</evidence>
<evidence type="ECO:0007744" key="14">
    <source>
    </source>
</evidence>
<evidence type="ECO:0007744" key="15">
    <source>
    </source>
</evidence>
<evidence type="ECO:0007744" key="16">
    <source>
    </source>
</evidence>
<comment type="function">
    <text evidence="1 4 5 6">Chromatin-binding protein that acts as an adapter between distinct nucleosome components (H3K36me3 or H2A.Z) and chromatin-modifying complexes, contributing to the regulation of the levels of histone acetylation at actively transcribed genes (PubMed:30228260, PubMed:30327463). Competes with CHD4 and MBD3 for interaction with MTA1 to form a NuRD subcomplex, preventing the formation of full NuRD complex (containing CHD4 and MBD3), leading to recruitment of HDACs to gene promoters resulting in turn in the deacetylation of nearby H3K27 and H2A.Z (PubMed:30228260, PubMed:30327463). Plays a role in facilitating transcriptional elongation and repression of spurious transcription initiation through regulation of histone acetylation (By similarity). Essential for proper mitosis progression (PubMed:28645917).</text>
</comment>
<comment type="subunit">
    <text evidence="4 5 6">Component of a MTA1-specific subcomplex of the NuRD complex (M1HR), composed of PWWP2A, MTA1/2, HDAC1/2, and RBBP4/7 but does not contain CHD4 and MBD3 (PubMed:30228260, PubMed:30327463). Interacts with MTA1; the interaction mediates the association of PWWP2A with the M1HR complex (PubMed:30228260, PubMed:30327463). Interacts with H2A.Z/H2AZ1 (PubMed:28645917, PubMed:30327463). Interacts (via PWWP domain) with histone H3 trimethylated at 'Lys-36' (H3K36me3) (PubMed:30228260, PubMed:30327463). Does not interact with CHD4 and MBD3 (PubMed:30228260, PubMed:30327463).</text>
</comment>
<comment type="subunit">
    <molecule>Isoform 1</molecule>
    <text evidence="5">Interacts with MTA1 and with HDAC1 in a MTA1-dependent manner (PubMed:30228260). Does not interact with CHD4 and MBD3 (PubMed:30228260).</text>
</comment>
<comment type="subunit">
    <molecule>Isoform 3</molecule>
    <text evidence="5">Interacts with MTA1 and with HDAC1 in a MTA1-dependent manner (PubMed:30228260). Does not interact with CHD4 and MBD3 (PubMed:30228260).</text>
</comment>
<comment type="interaction">
    <interactant intactId="EBI-6597774">
        <id>Q96N64</id>
    </interactant>
    <interactant intactId="EBI-1056125">
        <id>Q16778</id>
        <label>H2BC21</label>
    </interactant>
    <organismsDiffer>false</organismsDiffer>
    <experiments>2</experiments>
</comment>
<comment type="interaction">
    <interactant intactId="EBI-6597774">
        <id>Q96N64</id>
    </interactant>
    <interactant intactId="EBI-301834">
        <id>Q13547</id>
        <label>HDAC1</label>
    </interactant>
    <organismsDiffer>false</organismsDiffer>
    <experiments>8</experiments>
</comment>
<comment type="interaction">
    <interactant intactId="EBI-18924849">
        <id>Q96N64-2</id>
    </interactant>
    <interactant intactId="EBI-742388">
        <id>Q9H8W4</id>
        <label>PLEKHF2</label>
    </interactant>
    <organismsDiffer>false</organismsDiffer>
    <experiments>3</experiments>
</comment>
<comment type="subcellular location">
    <subcellularLocation>
        <location evidence="4">Nucleus</location>
    </subcellularLocation>
</comment>
<comment type="alternative products">
    <event type="alternative splicing"/>
    <isoform>
        <id>Q96N64-1</id>
        <name>1</name>
        <sequence type="displayed"/>
    </isoform>
    <isoform>
        <id>Q96N64-2</id>
        <name>2</name>
        <sequence type="described" ref="VSP_029547 VSP_029548"/>
    </isoform>
    <isoform>
        <id>Q96N64-3</id>
        <name>3</name>
        <sequence type="described" ref="VSP_054064 VSP_054065"/>
    </isoform>
</comment>
<comment type="sequence caution" evidence="8">
    <conflict type="erroneous initiation">
        <sequence resource="EMBL-CDS" id="AAH35076"/>
    </conflict>
</comment>
<comment type="sequence caution" evidence="8">
    <conflict type="erroneous initiation">
        <sequence resource="EMBL-CDS" id="BAB67828"/>
    </conflict>
</comment>
<comment type="sequence caution" evidence="8">
    <conflict type="erroneous initiation">
        <sequence resource="EMBL-CDS" id="BAB71045"/>
    </conflict>
</comment>
<proteinExistence type="evidence at protein level"/>